<accession>A8FS02</accession>
<reference key="1">
    <citation type="submission" date="2007-08" db="EMBL/GenBank/DDBJ databases">
        <title>Complete sequence of Shewanella sediminis HAW-EB3.</title>
        <authorList>
            <consortium name="US DOE Joint Genome Institute"/>
            <person name="Copeland A."/>
            <person name="Lucas S."/>
            <person name="Lapidus A."/>
            <person name="Barry K."/>
            <person name="Glavina del Rio T."/>
            <person name="Dalin E."/>
            <person name="Tice H."/>
            <person name="Pitluck S."/>
            <person name="Chertkov O."/>
            <person name="Brettin T."/>
            <person name="Bruce D."/>
            <person name="Detter J.C."/>
            <person name="Han C."/>
            <person name="Schmutz J."/>
            <person name="Larimer F."/>
            <person name="Land M."/>
            <person name="Hauser L."/>
            <person name="Kyrpides N."/>
            <person name="Kim E."/>
            <person name="Zhao J.-S."/>
            <person name="Richardson P."/>
        </authorList>
    </citation>
    <scope>NUCLEOTIDE SEQUENCE [LARGE SCALE GENOMIC DNA]</scope>
    <source>
        <strain>HAW-EB3</strain>
    </source>
</reference>
<sequence>MEFSVKSGSPEKQRSACIVVGVYEPRRLSGIAEQLDKISEGYISNLLRRGDLEGKPGQMLLLHHVPNVLSERVLLVGCGKERELDERQYKQIITKTIKTLNETGSMEAVCFLTELHVKGRDTYWKVREAVETTQNSLYSFDALKSAKGETRRPLRKLVFNVPTRRELTVGERAIEHGMAVSAGMRLCRDVANMPPNICNPAYLASQARQMGENSEELTVTTVGEEQMAKLGMNSYLAVGRGSDNESIMTVMEYKGAVDNTEKPIVLVGKGLTFDSGGISLKPGEGMDEMKYDMGGAAGVIGAMKALCDMKLPINVVAILAGCENMPSSNAYRPGDILTTMSGQTVEVLNTDAEGRLVLCDVLTYVERFDPELVVDTATLTGACVIALGKHASGLFSGHNPLAHELLNAGEQSGDRAWRLPIWDEYQEHLESPFADMTNLGGRPAGAITAACFLSRFTKKYNWAHIDVAGTAWNSGANKGSTGRPVPLLTQFLINRAGVEQGD</sequence>
<name>AMPA_SHESH</name>
<dbReference type="EC" id="3.4.11.1" evidence="1"/>
<dbReference type="EC" id="3.4.11.10" evidence="1"/>
<dbReference type="EMBL" id="CP000821">
    <property type="protein sequence ID" value="ABV35625.1"/>
    <property type="molecule type" value="Genomic_DNA"/>
</dbReference>
<dbReference type="RefSeq" id="WP_012141361.1">
    <property type="nucleotide sequence ID" value="NC_009831.1"/>
</dbReference>
<dbReference type="SMR" id="A8FS02"/>
<dbReference type="STRING" id="425104.Ssed_1014"/>
<dbReference type="MEROPS" id="M17.003"/>
<dbReference type="KEGG" id="sse:Ssed_1014"/>
<dbReference type="eggNOG" id="COG0260">
    <property type="taxonomic scope" value="Bacteria"/>
</dbReference>
<dbReference type="HOGENOM" id="CLU_013734_2_2_6"/>
<dbReference type="OrthoDB" id="9809354at2"/>
<dbReference type="Proteomes" id="UP000002015">
    <property type="component" value="Chromosome"/>
</dbReference>
<dbReference type="GO" id="GO:0005737">
    <property type="term" value="C:cytoplasm"/>
    <property type="evidence" value="ECO:0007669"/>
    <property type="project" value="UniProtKB-SubCell"/>
</dbReference>
<dbReference type="GO" id="GO:0030145">
    <property type="term" value="F:manganese ion binding"/>
    <property type="evidence" value="ECO:0007669"/>
    <property type="project" value="UniProtKB-UniRule"/>
</dbReference>
<dbReference type="GO" id="GO:0070006">
    <property type="term" value="F:metalloaminopeptidase activity"/>
    <property type="evidence" value="ECO:0007669"/>
    <property type="project" value="InterPro"/>
</dbReference>
<dbReference type="GO" id="GO:0006508">
    <property type="term" value="P:proteolysis"/>
    <property type="evidence" value="ECO:0007669"/>
    <property type="project" value="UniProtKB-KW"/>
</dbReference>
<dbReference type="CDD" id="cd00433">
    <property type="entry name" value="Peptidase_M17"/>
    <property type="match status" value="1"/>
</dbReference>
<dbReference type="FunFam" id="3.40.220.10:FF:000001">
    <property type="entry name" value="Probable cytosol aminopeptidase"/>
    <property type="match status" value="1"/>
</dbReference>
<dbReference type="FunFam" id="3.40.630.10:FF:000004">
    <property type="entry name" value="Probable cytosol aminopeptidase"/>
    <property type="match status" value="1"/>
</dbReference>
<dbReference type="Gene3D" id="3.40.220.10">
    <property type="entry name" value="Leucine Aminopeptidase, subunit E, domain 1"/>
    <property type="match status" value="1"/>
</dbReference>
<dbReference type="Gene3D" id="3.40.630.10">
    <property type="entry name" value="Zn peptidases"/>
    <property type="match status" value="1"/>
</dbReference>
<dbReference type="HAMAP" id="MF_00181">
    <property type="entry name" value="Cytosol_peptidase_M17"/>
    <property type="match status" value="1"/>
</dbReference>
<dbReference type="InterPro" id="IPR011356">
    <property type="entry name" value="Leucine_aapep/pepB"/>
</dbReference>
<dbReference type="InterPro" id="IPR043472">
    <property type="entry name" value="Macro_dom-like"/>
</dbReference>
<dbReference type="InterPro" id="IPR000819">
    <property type="entry name" value="Peptidase_M17_C"/>
</dbReference>
<dbReference type="InterPro" id="IPR023042">
    <property type="entry name" value="Peptidase_M17_leu_NH2_pept"/>
</dbReference>
<dbReference type="InterPro" id="IPR008283">
    <property type="entry name" value="Peptidase_M17_N"/>
</dbReference>
<dbReference type="NCBIfam" id="NF002072">
    <property type="entry name" value="PRK00913.1-1"/>
    <property type="match status" value="1"/>
</dbReference>
<dbReference type="NCBIfam" id="NF002074">
    <property type="entry name" value="PRK00913.1-4"/>
    <property type="match status" value="1"/>
</dbReference>
<dbReference type="PANTHER" id="PTHR11963:SF23">
    <property type="entry name" value="CYTOSOL AMINOPEPTIDASE"/>
    <property type="match status" value="1"/>
</dbReference>
<dbReference type="PANTHER" id="PTHR11963">
    <property type="entry name" value="LEUCINE AMINOPEPTIDASE-RELATED"/>
    <property type="match status" value="1"/>
</dbReference>
<dbReference type="Pfam" id="PF00883">
    <property type="entry name" value="Peptidase_M17"/>
    <property type="match status" value="1"/>
</dbReference>
<dbReference type="Pfam" id="PF02789">
    <property type="entry name" value="Peptidase_M17_N"/>
    <property type="match status" value="1"/>
</dbReference>
<dbReference type="PRINTS" id="PR00481">
    <property type="entry name" value="LAMNOPPTDASE"/>
</dbReference>
<dbReference type="SUPFAM" id="SSF52949">
    <property type="entry name" value="Macro domain-like"/>
    <property type="match status" value="1"/>
</dbReference>
<dbReference type="SUPFAM" id="SSF53187">
    <property type="entry name" value="Zn-dependent exopeptidases"/>
    <property type="match status" value="1"/>
</dbReference>
<dbReference type="PROSITE" id="PS00631">
    <property type="entry name" value="CYTOSOL_AP"/>
    <property type="match status" value="1"/>
</dbReference>
<organism>
    <name type="scientific">Shewanella sediminis (strain HAW-EB3)</name>
    <dbReference type="NCBI Taxonomy" id="425104"/>
    <lineage>
        <taxon>Bacteria</taxon>
        <taxon>Pseudomonadati</taxon>
        <taxon>Pseudomonadota</taxon>
        <taxon>Gammaproteobacteria</taxon>
        <taxon>Alteromonadales</taxon>
        <taxon>Shewanellaceae</taxon>
        <taxon>Shewanella</taxon>
    </lineage>
</organism>
<proteinExistence type="inferred from homology"/>
<keyword id="KW-0031">Aminopeptidase</keyword>
<keyword id="KW-0963">Cytoplasm</keyword>
<keyword id="KW-0378">Hydrolase</keyword>
<keyword id="KW-0464">Manganese</keyword>
<keyword id="KW-0479">Metal-binding</keyword>
<keyword id="KW-0645">Protease</keyword>
<keyword id="KW-1185">Reference proteome</keyword>
<evidence type="ECO:0000255" key="1">
    <source>
        <dbReference type="HAMAP-Rule" id="MF_00181"/>
    </source>
</evidence>
<gene>
    <name evidence="1" type="primary">pepA</name>
    <name type="ordered locus">Ssed_1014</name>
</gene>
<protein>
    <recommendedName>
        <fullName evidence="1">Probable cytosol aminopeptidase</fullName>
        <ecNumber evidence="1">3.4.11.1</ecNumber>
    </recommendedName>
    <alternativeName>
        <fullName evidence="1">Leucine aminopeptidase</fullName>
        <shortName evidence="1">LAP</shortName>
        <ecNumber evidence="1">3.4.11.10</ecNumber>
    </alternativeName>
    <alternativeName>
        <fullName evidence="1">Leucyl aminopeptidase</fullName>
    </alternativeName>
</protein>
<comment type="function">
    <text evidence="1">Presumably involved in the processing and regular turnover of intracellular proteins. Catalyzes the removal of unsubstituted N-terminal amino acids from various peptides.</text>
</comment>
<comment type="catalytic activity">
    <reaction evidence="1">
        <text>Release of an N-terminal amino acid, Xaa-|-Yaa-, in which Xaa is preferably Leu, but may be other amino acids including Pro although not Arg or Lys, and Yaa may be Pro. Amino acid amides and methyl esters are also readily hydrolyzed, but rates on arylamides are exceedingly low.</text>
        <dbReference type="EC" id="3.4.11.1"/>
    </reaction>
</comment>
<comment type="catalytic activity">
    <reaction evidence="1">
        <text>Release of an N-terminal amino acid, preferentially leucine, but not glutamic or aspartic acids.</text>
        <dbReference type="EC" id="3.4.11.10"/>
    </reaction>
</comment>
<comment type="cofactor">
    <cofactor evidence="1">
        <name>Mn(2+)</name>
        <dbReference type="ChEBI" id="CHEBI:29035"/>
    </cofactor>
    <text evidence="1">Binds 2 manganese ions per subunit.</text>
</comment>
<comment type="subcellular location">
    <subcellularLocation>
        <location evidence="1">Cytoplasm</location>
    </subcellularLocation>
</comment>
<comment type="similarity">
    <text evidence="1">Belongs to the peptidase M17 family.</text>
</comment>
<feature type="chain" id="PRO_1000077284" description="Probable cytosol aminopeptidase">
    <location>
        <begin position="1"/>
        <end position="502"/>
    </location>
</feature>
<feature type="active site" evidence="1">
    <location>
        <position position="281"/>
    </location>
</feature>
<feature type="active site" evidence="1">
    <location>
        <position position="355"/>
    </location>
</feature>
<feature type="binding site" evidence="1">
    <location>
        <position position="269"/>
    </location>
    <ligand>
        <name>Mn(2+)</name>
        <dbReference type="ChEBI" id="CHEBI:29035"/>
        <label>2</label>
    </ligand>
</feature>
<feature type="binding site" evidence="1">
    <location>
        <position position="274"/>
    </location>
    <ligand>
        <name>Mn(2+)</name>
        <dbReference type="ChEBI" id="CHEBI:29035"/>
        <label>1</label>
    </ligand>
</feature>
<feature type="binding site" evidence="1">
    <location>
        <position position="274"/>
    </location>
    <ligand>
        <name>Mn(2+)</name>
        <dbReference type="ChEBI" id="CHEBI:29035"/>
        <label>2</label>
    </ligand>
</feature>
<feature type="binding site" evidence="1">
    <location>
        <position position="292"/>
    </location>
    <ligand>
        <name>Mn(2+)</name>
        <dbReference type="ChEBI" id="CHEBI:29035"/>
        <label>2</label>
    </ligand>
</feature>
<feature type="binding site" evidence="1">
    <location>
        <position position="351"/>
    </location>
    <ligand>
        <name>Mn(2+)</name>
        <dbReference type="ChEBI" id="CHEBI:29035"/>
        <label>1</label>
    </ligand>
</feature>
<feature type="binding site" evidence="1">
    <location>
        <position position="353"/>
    </location>
    <ligand>
        <name>Mn(2+)</name>
        <dbReference type="ChEBI" id="CHEBI:29035"/>
        <label>1</label>
    </ligand>
</feature>
<feature type="binding site" evidence="1">
    <location>
        <position position="353"/>
    </location>
    <ligand>
        <name>Mn(2+)</name>
        <dbReference type="ChEBI" id="CHEBI:29035"/>
        <label>2</label>
    </ligand>
</feature>